<feature type="chain" id="PRO_0000419378" description="Protein PA-X">
    <location>
        <begin position="1"/>
        <end position="252"/>
    </location>
</feature>
<feature type="active site" evidence="2">
    <location>
        <position position="80"/>
    </location>
</feature>
<feature type="active site" evidence="2">
    <location>
        <position position="108"/>
    </location>
</feature>
<feature type="site" description="Important for efficient shutoff activity" evidence="5">
    <location>
        <position position="28"/>
    </location>
</feature>
<feature type="site" description="Important for efficient shutoff activity" evidence="5">
    <location>
        <position position="65"/>
    </location>
</feature>
<feature type="site" description="Important for efficient shutoff activity and nuclear localization" evidence="4">
    <location>
        <position position="195"/>
    </location>
</feature>
<feature type="site" description="Important for efficient shutoff activity and nuclear localization" evidence="4">
    <location>
        <position position="198"/>
    </location>
</feature>
<feature type="site" description="Important for efficient shutoff activity and nuclear localization" evidence="4">
    <location>
        <position position="199"/>
    </location>
</feature>
<feature type="site" description="Important for efficient shutoff activity" evidence="3">
    <location>
        <position position="202"/>
    </location>
</feature>
<feature type="site" description="Important for efficient shutoff activity" evidence="3">
    <location>
        <position position="203"/>
    </location>
</feature>
<feature type="site" description="Important for efficient shutoff activity" evidence="3">
    <location>
        <position position="206"/>
    </location>
</feature>
<name>PAX_I36A0</name>
<protein>
    <recommendedName>
        <fullName>Protein PA-X</fullName>
    </recommendedName>
</protein>
<organism>
    <name type="scientific">Influenza A virus (strain A/Henry/1936 H1N1)</name>
    <dbReference type="NCBI Taxonomy" id="425562"/>
    <lineage>
        <taxon>Viruses</taxon>
        <taxon>Riboviria</taxon>
        <taxon>Orthornavirae</taxon>
        <taxon>Negarnaviricota</taxon>
        <taxon>Polyploviricotina</taxon>
        <taxon>Insthoviricetes</taxon>
        <taxon>Articulavirales</taxon>
        <taxon>Orthomyxoviridae</taxon>
        <taxon>Alphainfluenzavirus</taxon>
        <taxon>Alphainfluenzavirus influenzae</taxon>
        <taxon>Influenza A virus</taxon>
    </lineage>
</organism>
<organismHost>
    <name type="scientific">Aves</name>
    <dbReference type="NCBI Taxonomy" id="8782"/>
</organismHost>
<organismHost>
    <name type="scientific">Homo sapiens</name>
    <name type="common">Human</name>
    <dbReference type="NCBI Taxonomy" id="9606"/>
</organismHost>
<organismHost>
    <name type="scientific">Sus scrofa</name>
    <name type="common">Pig</name>
    <dbReference type="NCBI Taxonomy" id="9823"/>
</organismHost>
<evidence type="ECO:0000250" key="1">
    <source>
        <dbReference type="UniProtKB" id="P0CK64"/>
    </source>
</evidence>
<evidence type="ECO:0000250" key="2">
    <source>
        <dbReference type="UniProtKB" id="P0CK68"/>
    </source>
</evidence>
<evidence type="ECO:0000250" key="3">
    <source>
        <dbReference type="UniProtKB" id="P0DJW8"/>
    </source>
</evidence>
<evidence type="ECO:0000250" key="4">
    <source>
        <dbReference type="UniProtKB" id="P0DXO5"/>
    </source>
</evidence>
<evidence type="ECO:0000250" key="5">
    <source>
        <dbReference type="UniProtKB" id="P0DXO6"/>
    </source>
</evidence>
<evidence type="ECO:0000305" key="6"/>
<sequence length="252" mass="29484">MEDFVRQCFNPMIVELAEKTMKEYGENLKIETNKFAAICTHLEVCFMYSDFHFINEQGESTIVELGDPNALLKHRFEIIEGRDRTMAWTVVNSICNTTGAEKPKFLPDLYDYKENRFIEIGVTRREVHIYYLEKANKIKSEKTHIHIFSFTGEEMATKTDYTLDEESRARIKTRLFTIRQEMASRGLWDSFVSPREEKRQLKKGLKSQEQCASLPTKVSRRTSPALKILEPMWMDSNRTATLRASFLKCPKK</sequence>
<gene>
    <name type="primary">PA</name>
</gene>
<proteinExistence type="inferred from homology"/>
<comment type="function">
    <text evidence="1 4">Plays a major role in the shutoff of the host protein expression by cleaving mRNAs probably via an endonuclease activity. This host shutoff allows the virus to escape from the host antiviral response (By similarity). Hijacks host RNA splicing machinery to selectively target host RNAs containing introns for destruction. This may explain the preferential degradation of RNAs that have undergone co- or post-transcriptional processing (By similarity).</text>
</comment>
<comment type="subcellular location">
    <subcellularLocation>
        <location evidence="4">Host cytoplasm</location>
    </subcellularLocation>
    <subcellularLocation>
        <location evidence="4">Host nucleus</location>
    </subcellularLocation>
</comment>
<comment type="alternative products">
    <event type="ribosomal frameshifting"/>
    <isoform>
        <id>P0DJR5-1</id>
        <name>PA-X</name>
        <sequence type="displayed"/>
    </isoform>
    <isoform>
        <id>A4GCJ3-1</id>
        <name>PA</name>
        <sequence type="external"/>
    </isoform>
</comment>
<comment type="domain">
    <text evidence="1 4">The probable endonuclease active site in the N-terminus and the basic amino acid cluster in the C-terminus are important for the shutoff activity. The C-terminus acts as a nuclear localization signal (By similarity). The C-terminus is recruited to host protein complexes involved in nuclear Pol II RNA processing (By similarity).</text>
</comment>
<comment type="similarity">
    <text evidence="6">Belongs to the influenza viruses PA-X family.</text>
</comment>
<reference key="1">
    <citation type="submission" date="2007-03" db="EMBL/GenBank/DDBJ databases">
        <title>The NIAID influenza genome sequencing project.</title>
        <authorList>
            <person name="Ghedin E."/>
            <person name="Spiro D."/>
            <person name="Miller N."/>
            <person name="Zaborsky J."/>
            <person name="Feldblyum T."/>
            <person name="Subbu V."/>
            <person name="Shumway M."/>
            <person name="Sparenborg J."/>
            <person name="Groveman L."/>
            <person name="Halpin R."/>
            <person name="Sitz J."/>
            <person name="Koo H."/>
            <person name="Salzberg S.L."/>
            <person name="Webster R.G."/>
            <person name="Hoffmann E."/>
            <person name="Krauss S."/>
            <person name="Naeve C."/>
            <person name="Bao Y."/>
            <person name="Bolotov P."/>
            <person name="Dernovoy D."/>
            <person name="Kiryutin B."/>
            <person name="Lipman D.J."/>
            <person name="Tatusova T."/>
        </authorList>
    </citation>
    <scope>NUCLEOTIDE SEQUENCE [GENOMIC RNA]</scope>
</reference>
<reference key="2">
    <citation type="submission" date="2007-03" db="EMBL/GenBank/DDBJ databases">
        <authorList>
            <consortium name="The NIAID Influenza Genome Sequencing Consortium"/>
        </authorList>
    </citation>
    <scope>NUCLEOTIDE SEQUENCE [GENOMIC RNA]</scope>
</reference>
<accession>P0DJR5</accession>
<keyword id="KW-1132">Decay of host mRNAs by virus</keyword>
<keyword id="KW-1262">Eukaryotic host gene expression shutoff by virus</keyword>
<keyword id="KW-1035">Host cytoplasm</keyword>
<keyword id="KW-1190">Host gene expression shutoff by virus</keyword>
<keyword id="KW-1192">Host mRNA suppression by virus</keyword>
<keyword id="KW-1048">Host nucleus</keyword>
<keyword id="KW-0945">Host-virus interaction</keyword>
<keyword id="KW-0688">Ribosomal frameshifting</keyword>
<dbReference type="EMBL" id="CY020450">
    <property type="status" value="NOT_ANNOTATED_CDS"/>
    <property type="molecule type" value="Viral_cRNA"/>
</dbReference>
<dbReference type="SMR" id="P0DJR5"/>
<dbReference type="Proteomes" id="UP000008213">
    <property type="component" value="Genome"/>
</dbReference>
<dbReference type="GO" id="GO:0003723">
    <property type="term" value="F:RNA binding"/>
    <property type="evidence" value="ECO:0007669"/>
    <property type="project" value="InterPro"/>
</dbReference>
<dbReference type="GO" id="GO:0039694">
    <property type="term" value="P:viral RNA genome replication"/>
    <property type="evidence" value="ECO:0007669"/>
    <property type="project" value="InterPro"/>
</dbReference>
<dbReference type="GO" id="GO:0075523">
    <property type="term" value="P:viral translational frameshifting"/>
    <property type="evidence" value="ECO:0007669"/>
    <property type="project" value="UniProtKB-KW"/>
</dbReference>
<dbReference type="FunFam" id="3.40.91.90:FF:000001">
    <property type="entry name" value="Polymerase acidic protein"/>
    <property type="match status" value="1"/>
</dbReference>
<dbReference type="Gene3D" id="3.40.91.90">
    <property type="entry name" value="Influenza RNA-dependent RNA polymerase subunit PA, endonuclease domain"/>
    <property type="match status" value="1"/>
</dbReference>
<dbReference type="InterPro" id="IPR001009">
    <property type="entry name" value="PA/PA-X"/>
</dbReference>
<dbReference type="InterPro" id="IPR038372">
    <property type="entry name" value="PA/PA-X_sf"/>
</dbReference>
<dbReference type="Pfam" id="PF00603">
    <property type="entry name" value="Flu_PA"/>
    <property type="match status" value="1"/>
</dbReference>